<feature type="chain" id="PRO_0000301855" description="TIP41-like protein">
    <location>
        <begin position="1"/>
        <end position="271"/>
    </location>
</feature>
<feature type="region of interest" description="Interaction with PPP2CA" evidence="1">
    <location>
        <begin position="173"/>
        <end position="271"/>
    </location>
</feature>
<feature type="modified residue" description="N6-acetyllysine" evidence="2">
    <location>
        <position position="106"/>
    </location>
</feature>
<feature type="modified residue" description="Phosphoserine" evidence="2">
    <location>
        <position position="265"/>
    </location>
</feature>
<feature type="modified residue" description="Phosphoserine" evidence="5">
    <location>
        <position position="270"/>
    </location>
</feature>
<dbReference type="EMBL" id="BC128780">
    <property type="protein sequence ID" value="AAI28781.1"/>
    <property type="molecule type" value="mRNA"/>
</dbReference>
<dbReference type="RefSeq" id="NP_001103137.1">
    <property type="nucleotide sequence ID" value="NM_001109667.1"/>
</dbReference>
<dbReference type="SMR" id="A2VCX1"/>
<dbReference type="FunCoup" id="A2VCX1">
    <property type="interactions" value="3412"/>
</dbReference>
<dbReference type="STRING" id="10116.ENSRNOP00000004083"/>
<dbReference type="iPTMnet" id="A2VCX1"/>
<dbReference type="PhosphoSitePlus" id="A2VCX1"/>
<dbReference type="jPOST" id="A2VCX1"/>
<dbReference type="PaxDb" id="10116-ENSRNOP00000004083"/>
<dbReference type="PeptideAtlas" id="A2VCX1"/>
<dbReference type="GeneID" id="360869"/>
<dbReference type="KEGG" id="rno:360869"/>
<dbReference type="AGR" id="RGD:1310442"/>
<dbReference type="CTD" id="261726"/>
<dbReference type="RGD" id="1310442">
    <property type="gene designation" value="Tiprl"/>
</dbReference>
<dbReference type="VEuPathDB" id="HostDB:ENSRNOG00000003048"/>
<dbReference type="eggNOG" id="KOG3224">
    <property type="taxonomic scope" value="Eukaryota"/>
</dbReference>
<dbReference type="HOGENOM" id="CLU_039187_2_0_1"/>
<dbReference type="InParanoid" id="A2VCX1"/>
<dbReference type="OrthoDB" id="10253878at2759"/>
<dbReference type="PhylomeDB" id="A2VCX1"/>
<dbReference type="TreeFam" id="TF105943"/>
<dbReference type="PRO" id="PR:A2VCX1"/>
<dbReference type="Proteomes" id="UP000002494">
    <property type="component" value="Chromosome 13"/>
</dbReference>
<dbReference type="Bgee" id="ENSRNOG00000003048">
    <property type="expression patterns" value="Expressed in thymus and 20 other cell types or tissues"/>
</dbReference>
<dbReference type="GO" id="GO:0005829">
    <property type="term" value="C:cytosol"/>
    <property type="evidence" value="ECO:0000318"/>
    <property type="project" value="GO_Central"/>
</dbReference>
<dbReference type="GO" id="GO:0072542">
    <property type="term" value="F:protein phosphatase activator activity"/>
    <property type="evidence" value="ECO:0000318"/>
    <property type="project" value="GO_Central"/>
</dbReference>
<dbReference type="GO" id="GO:0004864">
    <property type="term" value="F:protein phosphatase inhibitor activity"/>
    <property type="evidence" value="ECO:0000266"/>
    <property type="project" value="RGD"/>
</dbReference>
<dbReference type="GO" id="GO:0000077">
    <property type="term" value="P:DNA damage checkpoint signaling"/>
    <property type="evidence" value="ECO:0000266"/>
    <property type="project" value="RGD"/>
</dbReference>
<dbReference type="GO" id="GO:0031929">
    <property type="term" value="P:TOR signaling"/>
    <property type="evidence" value="ECO:0000318"/>
    <property type="project" value="GO_Central"/>
</dbReference>
<dbReference type="InterPro" id="IPR051330">
    <property type="entry name" value="Phosphatase_reg/MetRdx"/>
</dbReference>
<dbReference type="InterPro" id="IPR007303">
    <property type="entry name" value="TIP41-like"/>
</dbReference>
<dbReference type="PANTHER" id="PTHR21021">
    <property type="entry name" value="GAF/PUTATIVE CYTOSKELETAL PROTEIN"/>
    <property type="match status" value="1"/>
</dbReference>
<dbReference type="PANTHER" id="PTHR21021:SF16">
    <property type="entry name" value="TIP41-LIKE PROTEIN"/>
    <property type="match status" value="1"/>
</dbReference>
<dbReference type="Pfam" id="PF04176">
    <property type="entry name" value="TIP41"/>
    <property type="match status" value="1"/>
</dbReference>
<name>TIPRL_RAT</name>
<protein>
    <recommendedName>
        <fullName>TIP41-like protein</fullName>
    </recommendedName>
</protein>
<evidence type="ECO:0000250" key="1"/>
<evidence type="ECO:0000250" key="2">
    <source>
        <dbReference type="UniProtKB" id="O75663"/>
    </source>
</evidence>
<evidence type="ECO:0000250" key="3">
    <source>
        <dbReference type="UniProtKB" id="Q8BH58"/>
    </source>
</evidence>
<evidence type="ECO:0000305" key="4"/>
<evidence type="ECO:0007744" key="5">
    <source>
    </source>
</evidence>
<sequence length="271" mass="31225">MMIHGFQSSHQDFSFGPWKLTASKTHIMKSADVEKLADELHMPSLPEMMFGDNVLRIQHGSGFGIEFNATDALRCVNNYQGMLKVACAEEWQESRTEGEHSKEVIKPYDWTYTTDYKGTLLGESLKLKVVPTTDHIDTEKLKAREQIKFFEEVLLFEDELHDHGVSSLSVKIRVMPSSFFLLLRFFLRIDGVLIRMNDTRLYHEADKTYMLREYTSRESKIANLMHVPPSLFTEPNEISQYLPIKEAVCEKLVFPERIDPNPVDSESAPSE</sequence>
<comment type="function">
    <text evidence="2">May be a allosteric regulator of serine/threonine-protein phosphatase 2A (PP2A). Inhibits catalytic activity of the PP2A(D) core complex in vitro. The PP2A(C):TIPRL complex does not show phosphatase activity. Acts as a negative regulator of serine/threonine-protein phosphatase 4 probably by inhibiting the formation of the active PPP4C:PPP4R2 complex; the function is proposed to implicate it in DNA damage response by promoting H2AX phosphorylated on Ser-140 (gamma-H2AX). May play a role in the regulation of ATM/ATR signaling pathway controlling DNA replication and repair (By similarity).</text>
</comment>
<comment type="subunit">
    <text evidence="2 3">Interacts with PPP2CA. Interacts with PPP2CB, PPP4C and PPP6C. Interacts with IGBP1; the interaction is dependent on PPP2CA. Associates with a protein phosphatase 2A PP2A(C):IGBP1 complex. Interacts with PPP4C and PPP4R2 (By similarity).</text>
</comment>
<comment type="subcellular location">
    <subcellularLocation>
        <location evidence="1">Cytoplasm</location>
    </subcellularLocation>
</comment>
<comment type="similarity">
    <text evidence="4">Belongs to the TIP41 family.</text>
</comment>
<keyword id="KW-0007">Acetylation</keyword>
<keyword id="KW-0963">Cytoplasm</keyword>
<keyword id="KW-0597">Phosphoprotein</keyword>
<keyword id="KW-1185">Reference proteome</keyword>
<gene>
    <name type="primary">Tiprl</name>
</gene>
<reference key="1">
    <citation type="journal article" date="2004" name="Genome Res.">
        <title>The status, quality, and expansion of the NIH full-length cDNA project: the Mammalian Gene Collection (MGC).</title>
        <authorList>
            <consortium name="The MGC Project Team"/>
        </authorList>
    </citation>
    <scope>NUCLEOTIDE SEQUENCE [LARGE SCALE MRNA]</scope>
    <source>
        <tissue>Brain</tissue>
    </source>
</reference>
<reference key="2">
    <citation type="journal article" date="2012" name="Nat. Commun.">
        <title>Quantitative maps of protein phosphorylation sites across 14 different rat organs and tissues.</title>
        <authorList>
            <person name="Lundby A."/>
            <person name="Secher A."/>
            <person name="Lage K."/>
            <person name="Nordsborg N.B."/>
            <person name="Dmytriyev A."/>
            <person name="Lundby C."/>
            <person name="Olsen J.V."/>
        </authorList>
    </citation>
    <scope>PHOSPHORYLATION [LARGE SCALE ANALYSIS] AT SER-270</scope>
    <scope>IDENTIFICATION BY MASS SPECTROMETRY [LARGE SCALE ANALYSIS]</scope>
</reference>
<proteinExistence type="evidence at protein level"/>
<accession>A2VCX1</accession>
<organism>
    <name type="scientific">Rattus norvegicus</name>
    <name type="common">Rat</name>
    <dbReference type="NCBI Taxonomy" id="10116"/>
    <lineage>
        <taxon>Eukaryota</taxon>
        <taxon>Metazoa</taxon>
        <taxon>Chordata</taxon>
        <taxon>Craniata</taxon>
        <taxon>Vertebrata</taxon>
        <taxon>Euteleostomi</taxon>
        <taxon>Mammalia</taxon>
        <taxon>Eutheria</taxon>
        <taxon>Euarchontoglires</taxon>
        <taxon>Glires</taxon>
        <taxon>Rodentia</taxon>
        <taxon>Myomorpha</taxon>
        <taxon>Muroidea</taxon>
        <taxon>Muridae</taxon>
        <taxon>Murinae</taxon>
        <taxon>Rattus</taxon>
    </lineage>
</organism>